<evidence type="ECO:0000250" key="1">
    <source>
        <dbReference type="UniProtKB" id="Q6PL24"/>
    </source>
</evidence>
<evidence type="ECO:0000255" key="2">
    <source>
        <dbReference type="PROSITE-ProRule" id="PRU00096"/>
    </source>
</evidence>
<evidence type="ECO:0000256" key="3">
    <source>
        <dbReference type="SAM" id="MobiDB-lite"/>
    </source>
</evidence>
<keyword id="KW-0007">Acetylation</keyword>
<keyword id="KW-1185">Reference proteome</keyword>
<sequence length="326" mass="35813">MSDLQAAEGPGSWSPTARPGSAGGVGDCQGVEGSQAAASENEDLENNKDTSLLASATDPEPCSPPHRPQMVSPGSKDATEDLRKATGALEAQALVKQDLLPADQAQVLNEMAKYQVPQRSGDIVMIQSEHTGAIDVLSADLESADLLGDHRKVSPPLMAPPCIWTFAKVKEFKSKLGKEKNSRLVVKRGEVVTIRVPTHPEGKRVCWEFATDDYDIGFGVYFDWTPVTSTDITVQVSDSCDDEDEEEEEEEEIEEPVPAGDVERGSRSSLRGRYGEVMPVYRRDSHRDVQAGSHDYPGEGIYLLKFDNSYSLLRNKTLYFHIYYTS</sequence>
<dbReference type="EMBL" id="CR859312">
    <property type="protein sequence ID" value="CAH91490.1"/>
    <property type="molecule type" value="mRNA"/>
</dbReference>
<dbReference type="RefSeq" id="NP_001124547.1">
    <property type="nucleotide sequence ID" value="NM_001131075.1"/>
</dbReference>
<dbReference type="SMR" id="Q5R9S0"/>
<dbReference type="FunCoup" id="Q5R9S0">
    <property type="interactions" value="418"/>
</dbReference>
<dbReference type="STRING" id="9601.ENSPPYP00000006850"/>
<dbReference type="GeneID" id="100127059"/>
<dbReference type="KEGG" id="pon:100127059"/>
<dbReference type="CTD" id="283578"/>
<dbReference type="eggNOG" id="KOG3878">
    <property type="taxonomic scope" value="Eukaryota"/>
</dbReference>
<dbReference type="InParanoid" id="Q5R9S0"/>
<dbReference type="OrthoDB" id="5839451at2759"/>
<dbReference type="Proteomes" id="UP000001595">
    <property type="component" value="Unplaced"/>
</dbReference>
<dbReference type="Gene3D" id="2.60.120.680">
    <property type="entry name" value="GOLD domain"/>
    <property type="match status" value="1"/>
</dbReference>
<dbReference type="InterPro" id="IPR009038">
    <property type="entry name" value="GOLD_dom"/>
</dbReference>
<dbReference type="InterPro" id="IPR036598">
    <property type="entry name" value="GOLD_dom_sf"/>
</dbReference>
<dbReference type="InterPro" id="IPR052269">
    <property type="entry name" value="Golgi-PI4KB_interaction"/>
</dbReference>
<dbReference type="PANTHER" id="PTHR22973">
    <property type="entry name" value="LD35087P"/>
    <property type="match status" value="1"/>
</dbReference>
<dbReference type="PANTHER" id="PTHR22973:SF3">
    <property type="entry name" value="PROTEIN TMED8"/>
    <property type="match status" value="1"/>
</dbReference>
<dbReference type="Pfam" id="PF13897">
    <property type="entry name" value="GOLD_2"/>
    <property type="match status" value="1"/>
</dbReference>
<dbReference type="SUPFAM" id="SSF101576">
    <property type="entry name" value="Supernatant protein factor (SPF), C-terminal domain"/>
    <property type="match status" value="1"/>
</dbReference>
<dbReference type="PROSITE" id="PS50866">
    <property type="entry name" value="GOLD"/>
    <property type="match status" value="1"/>
</dbReference>
<reference key="1">
    <citation type="submission" date="2004-11" db="EMBL/GenBank/DDBJ databases">
        <authorList>
            <consortium name="The German cDNA consortium"/>
        </authorList>
    </citation>
    <scope>NUCLEOTIDE SEQUENCE [LARGE SCALE MRNA]</scope>
    <source>
        <tissue>Kidney</tissue>
    </source>
</reference>
<feature type="chain" id="PRO_0000055639" description="Protein TMED8">
    <location>
        <begin position="1"/>
        <end position="326"/>
    </location>
</feature>
<feature type="domain" description="GOLD" evidence="2">
    <location>
        <begin position="160"/>
        <end position="324"/>
    </location>
</feature>
<feature type="region of interest" description="Disordered" evidence="3">
    <location>
        <begin position="1"/>
        <end position="80"/>
    </location>
</feature>
<feature type="region of interest" description="Disordered" evidence="3">
    <location>
        <begin position="238"/>
        <end position="268"/>
    </location>
</feature>
<feature type="compositionally biased region" description="Acidic residues" evidence="3">
    <location>
        <begin position="239"/>
        <end position="255"/>
    </location>
</feature>
<feature type="modified residue" description="N6-acetyllysine" evidence="1">
    <location>
        <position position="170"/>
    </location>
</feature>
<accession>Q5R9S0</accession>
<name>TMED8_PONAB</name>
<gene>
    <name type="primary">TMED8</name>
</gene>
<protein>
    <recommendedName>
        <fullName>Protein TMED8</fullName>
    </recommendedName>
</protein>
<proteinExistence type="evidence at transcript level"/>
<organism>
    <name type="scientific">Pongo abelii</name>
    <name type="common">Sumatran orangutan</name>
    <name type="synonym">Pongo pygmaeus abelii</name>
    <dbReference type="NCBI Taxonomy" id="9601"/>
    <lineage>
        <taxon>Eukaryota</taxon>
        <taxon>Metazoa</taxon>
        <taxon>Chordata</taxon>
        <taxon>Craniata</taxon>
        <taxon>Vertebrata</taxon>
        <taxon>Euteleostomi</taxon>
        <taxon>Mammalia</taxon>
        <taxon>Eutheria</taxon>
        <taxon>Euarchontoglires</taxon>
        <taxon>Primates</taxon>
        <taxon>Haplorrhini</taxon>
        <taxon>Catarrhini</taxon>
        <taxon>Hominidae</taxon>
        <taxon>Pongo</taxon>
    </lineage>
</organism>